<gene>
    <name evidence="1" type="primary">smpB</name>
    <name type="ordered locus">BPSL2137</name>
</gene>
<organism>
    <name type="scientific">Burkholderia pseudomallei (strain K96243)</name>
    <dbReference type="NCBI Taxonomy" id="272560"/>
    <lineage>
        <taxon>Bacteria</taxon>
        <taxon>Pseudomonadati</taxon>
        <taxon>Pseudomonadota</taxon>
        <taxon>Betaproteobacteria</taxon>
        <taxon>Burkholderiales</taxon>
        <taxon>Burkholderiaceae</taxon>
        <taxon>Burkholderia</taxon>
        <taxon>pseudomallei group</taxon>
    </lineage>
</organism>
<reference key="1">
    <citation type="journal article" date="2004" name="Proc. Natl. Acad. Sci. U.S.A.">
        <title>Genomic plasticity of the causative agent of melioidosis, Burkholderia pseudomallei.</title>
        <authorList>
            <person name="Holden M.T.G."/>
            <person name="Titball R.W."/>
            <person name="Peacock S.J."/>
            <person name="Cerdeno-Tarraga A.-M."/>
            <person name="Atkins T."/>
            <person name="Crossman L.C."/>
            <person name="Pitt T."/>
            <person name="Churcher C."/>
            <person name="Mungall K.L."/>
            <person name="Bentley S.D."/>
            <person name="Sebaihia M."/>
            <person name="Thomson N.R."/>
            <person name="Bason N."/>
            <person name="Beacham I.R."/>
            <person name="Brooks K."/>
            <person name="Brown K.A."/>
            <person name="Brown N.F."/>
            <person name="Challis G.L."/>
            <person name="Cherevach I."/>
            <person name="Chillingworth T."/>
            <person name="Cronin A."/>
            <person name="Crossett B."/>
            <person name="Davis P."/>
            <person name="DeShazer D."/>
            <person name="Feltwell T."/>
            <person name="Fraser A."/>
            <person name="Hance Z."/>
            <person name="Hauser H."/>
            <person name="Holroyd S."/>
            <person name="Jagels K."/>
            <person name="Keith K.E."/>
            <person name="Maddison M."/>
            <person name="Moule S."/>
            <person name="Price C."/>
            <person name="Quail M.A."/>
            <person name="Rabbinowitsch E."/>
            <person name="Rutherford K."/>
            <person name="Sanders M."/>
            <person name="Simmonds M."/>
            <person name="Songsivilai S."/>
            <person name="Stevens K."/>
            <person name="Tumapa S."/>
            <person name="Vesaratchavest M."/>
            <person name="Whitehead S."/>
            <person name="Yeats C."/>
            <person name="Barrell B.G."/>
            <person name="Oyston P.C.F."/>
            <person name="Parkhill J."/>
        </authorList>
    </citation>
    <scope>NUCLEOTIDE SEQUENCE [LARGE SCALE GENOMIC DNA]</scope>
    <source>
        <strain>K96243</strain>
    </source>
</reference>
<comment type="function">
    <text evidence="1">Required for rescue of stalled ribosomes mediated by trans-translation. Binds to transfer-messenger RNA (tmRNA), required for stable association of tmRNA with ribosomes. tmRNA and SmpB together mimic tRNA shape, replacing the anticodon stem-loop with SmpB. tmRNA is encoded by the ssrA gene; the 2 termini fold to resemble tRNA(Ala) and it encodes a 'tag peptide', a short internal open reading frame. During trans-translation Ala-aminoacylated tmRNA acts like a tRNA, entering the A-site of stalled ribosomes, displacing the stalled mRNA. The ribosome then switches to translate the ORF on the tmRNA; the nascent peptide is terminated with the 'tag peptide' encoded by the tmRNA and targeted for degradation. The ribosome is freed to recommence translation, which seems to be the essential function of trans-translation.</text>
</comment>
<comment type="subcellular location">
    <subcellularLocation>
        <location evidence="1">Cytoplasm</location>
    </subcellularLocation>
    <text evidence="1">The tmRNA-SmpB complex associates with stalled 70S ribosomes.</text>
</comment>
<comment type="similarity">
    <text evidence="1">Belongs to the SmpB family.</text>
</comment>
<dbReference type="EMBL" id="BX571965">
    <property type="protein sequence ID" value="CAH36139.1"/>
    <property type="molecule type" value="Genomic_DNA"/>
</dbReference>
<dbReference type="RefSeq" id="WP_004197080.1">
    <property type="nucleotide sequence ID" value="NZ_CP009538.1"/>
</dbReference>
<dbReference type="RefSeq" id="YP_108732.1">
    <property type="nucleotide sequence ID" value="NC_006350.1"/>
</dbReference>
<dbReference type="SMR" id="Q63T34"/>
<dbReference type="STRING" id="272560.BPSL2137"/>
<dbReference type="GeneID" id="93060677"/>
<dbReference type="KEGG" id="bps:BPSL2137"/>
<dbReference type="PATRIC" id="fig|272560.51.peg.3319"/>
<dbReference type="eggNOG" id="COG0691">
    <property type="taxonomic scope" value="Bacteria"/>
</dbReference>
<dbReference type="Proteomes" id="UP000000605">
    <property type="component" value="Chromosome 1"/>
</dbReference>
<dbReference type="GO" id="GO:0005829">
    <property type="term" value="C:cytosol"/>
    <property type="evidence" value="ECO:0007669"/>
    <property type="project" value="TreeGrafter"/>
</dbReference>
<dbReference type="GO" id="GO:0003723">
    <property type="term" value="F:RNA binding"/>
    <property type="evidence" value="ECO:0007669"/>
    <property type="project" value="UniProtKB-UniRule"/>
</dbReference>
<dbReference type="GO" id="GO:0070929">
    <property type="term" value="P:trans-translation"/>
    <property type="evidence" value="ECO:0007669"/>
    <property type="project" value="UniProtKB-UniRule"/>
</dbReference>
<dbReference type="CDD" id="cd09294">
    <property type="entry name" value="SmpB"/>
    <property type="match status" value="1"/>
</dbReference>
<dbReference type="Gene3D" id="2.40.280.10">
    <property type="match status" value="1"/>
</dbReference>
<dbReference type="HAMAP" id="MF_00023">
    <property type="entry name" value="SmpB"/>
    <property type="match status" value="1"/>
</dbReference>
<dbReference type="InterPro" id="IPR023620">
    <property type="entry name" value="SmpB"/>
</dbReference>
<dbReference type="InterPro" id="IPR000037">
    <property type="entry name" value="SsrA-bd_prot"/>
</dbReference>
<dbReference type="InterPro" id="IPR020081">
    <property type="entry name" value="SsrA-bd_prot_CS"/>
</dbReference>
<dbReference type="NCBIfam" id="NF003843">
    <property type="entry name" value="PRK05422.1"/>
    <property type="match status" value="1"/>
</dbReference>
<dbReference type="NCBIfam" id="TIGR00086">
    <property type="entry name" value="smpB"/>
    <property type="match status" value="1"/>
</dbReference>
<dbReference type="PANTHER" id="PTHR30308:SF2">
    <property type="entry name" value="SSRA-BINDING PROTEIN"/>
    <property type="match status" value="1"/>
</dbReference>
<dbReference type="PANTHER" id="PTHR30308">
    <property type="entry name" value="TMRNA-BINDING COMPONENT OF TRANS-TRANSLATION TAGGING COMPLEX"/>
    <property type="match status" value="1"/>
</dbReference>
<dbReference type="Pfam" id="PF01668">
    <property type="entry name" value="SmpB"/>
    <property type="match status" value="1"/>
</dbReference>
<dbReference type="SUPFAM" id="SSF74982">
    <property type="entry name" value="Small protein B (SmpB)"/>
    <property type="match status" value="1"/>
</dbReference>
<dbReference type="PROSITE" id="PS01317">
    <property type="entry name" value="SSRP"/>
    <property type="match status" value="1"/>
</dbReference>
<accession>Q63T34</accession>
<feature type="chain" id="PRO_0000102924" description="SsrA-binding protein">
    <location>
        <begin position="1"/>
        <end position="148"/>
    </location>
</feature>
<feature type="region of interest" description="Disordered" evidence="2">
    <location>
        <begin position="123"/>
        <end position="148"/>
    </location>
</feature>
<feature type="compositionally biased region" description="Basic and acidic residues" evidence="2">
    <location>
        <begin position="126"/>
        <end position="142"/>
    </location>
</feature>
<protein>
    <recommendedName>
        <fullName evidence="1">SsrA-binding protein</fullName>
    </recommendedName>
    <alternativeName>
        <fullName evidence="1">Small protein B</fullName>
    </alternativeName>
</protein>
<proteinExistence type="inferred from homology"/>
<name>SSRP_BURPS</name>
<keyword id="KW-0963">Cytoplasm</keyword>
<keyword id="KW-1185">Reference proteome</keyword>
<keyword id="KW-0694">RNA-binding</keyword>
<evidence type="ECO:0000255" key="1">
    <source>
        <dbReference type="HAMAP-Rule" id="MF_00023"/>
    </source>
</evidence>
<evidence type="ECO:0000256" key="2">
    <source>
        <dbReference type="SAM" id="MobiDB-lite"/>
    </source>
</evidence>
<sequence length="148" mass="17212">MSIIDNRKAFFDYHIEERYEAGLVLEGWEVKALRAGRGQIKEGYVVVKHAEIFLIGTHISPLPEASTHIKPDPVRTRKLLLHRDEIKKLIGKVEQRGYTLVPLNFHYKGGRVKCEIGLAKGKKLHDKRETEKKRDWEREKARIMRSAT</sequence>